<keyword id="KW-0028">Amino-acid biosynthesis</keyword>
<keyword id="KW-0100">Branched-chain amino acid biosynthesis</keyword>
<keyword id="KW-0460">Magnesium</keyword>
<keyword id="KW-0479">Metal-binding</keyword>
<keyword id="KW-0521">NADP</keyword>
<keyword id="KW-0560">Oxidoreductase</keyword>
<comment type="function">
    <text evidence="1">Involved in the biosynthesis of branched-chain amino acids (BCAA). Catalyzes an alkyl-migration followed by a ketol-acid reduction of (S)-2-acetolactate (S2AL) to yield (R)-2,3-dihydroxy-isovalerate. In the isomerase reaction, S2AL is rearranged via a Mg-dependent methyl migration to produce 3-hydroxy-3-methyl-2-ketobutyrate (HMKB). In the reductase reaction, this 2-ketoacid undergoes a metal-dependent reduction by NADPH to yield (R)-2,3-dihydroxy-isovalerate.</text>
</comment>
<comment type="catalytic activity">
    <reaction evidence="1">
        <text>(2R)-2,3-dihydroxy-3-methylbutanoate + NADP(+) = (2S)-2-acetolactate + NADPH + H(+)</text>
        <dbReference type="Rhea" id="RHEA:22068"/>
        <dbReference type="ChEBI" id="CHEBI:15378"/>
        <dbReference type="ChEBI" id="CHEBI:49072"/>
        <dbReference type="ChEBI" id="CHEBI:57783"/>
        <dbReference type="ChEBI" id="CHEBI:58349"/>
        <dbReference type="ChEBI" id="CHEBI:58476"/>
        <dbReference type="EC" id="1.1.1.86"/>
    </reaction>
</comment>
<comment type="catalytic activity">
    <reaction evidence="1">
        <text>(2R,3R)-2,3-dihydroxy-3-methylpentanoate + NADP(+) = (S)-2-ethyl-2-hydroxy-3-oxobutanoate + NADPH + H(+)</text>
        <dbReference type="Rhea" id="RHEA:13493"/>
        <dbReference type="ChEBI" id="CHEBI:15378"/>
        <dbReference type="ChEBI" id="CHEBI:49256"/>
        <dbReference type="ChEBI" id="CHEBI:49258"/>
        <dbReference type="ChEBI" id="CHEBI:57783"/>
        <dbReference type="ChEBI" id="CHEBI:58349"/>
        <dbReference type="EC" id="1.1.1.86"/>
    </reaction>
</comment>
<comment type="cofactor">
    <cofactor evidence="1">
        <name>Mg(2+)</name>
        <dbReference type="ChEBI" id="CHEBI:18420"/>
    </cofactor>
    <text evidence="1">Binds 2 magnesium ions per subunit.</text>
</comment>
<comment type="pathway">
    <text evidence="1">Amino-acid biosynthesis; L-isoleucine biosynthesis; L-isoleucine from 2-oxobutanoate: step 2/4.</text>
</comment>
<comment type="pathway">
    <text evidence="1">Amino-acid biosynthesis; L-valine biosynthesis; L-valine from pyruvate: step 2/4.</text>
</comment>
<comment type="similarity">
    <text evidence="1">Belongs to the ketol-acid reductoisomerase family.</text>
</comment>
<feature type="chain" id="PRO_1000072320" description="Ketol-acid reductoisomerase (NADP(+))">
    <location>
        <begin position="1"/>
        <end position="340"/>
    </location>
</feature>
<feature type="domain" description="KARI N-terminal Rossmann" evidence="2">
    <location>
        <begin position="1"/>
        <end position="183"/>
    </location>
</feature>
<feature type="domain" description="KARI C-terminal knotted" evidence="3">
    <location>
        <begin position="184"/>
        <end position="329"/>
    </location>
</feature>
<feature type="active site" evidence="1">
    <location>
        <position position="109"/>
    </location>
</feature>
<feature type="binding site" evidence="1">
    <location>
        <begin position="26"/>
        <end position="29"/>
    </location>
    <ligand>
        <name>NADP(+)</name>
        <dbReference type="ChEBI" id="CHEBI:58349"/>
    </ligand>
</feature>
<feature type="binding site" evidence="1">
    <location>
        <position position="49"/>
    </location>
    <ligand>
        <name>NADP(+)</name>
        <dbReference type="ChEBI" id="CHEBI:58349"/>
    </ligand>
</feature>
<feature type="binding site" evidence="1">
    <location>
        <position position="52"/>
    </location>
    <ligand>
        <name>NADP(+)</name>
        <dbReference type="ChEBI" id="CHEBI:58349"/>
    </ligand>
</feature>
<feature type="binding site" evidence="1">
    <location>
        <position position="54"/>
    </location>
    <ligand>
        <name>NADP(+)</name>
        <dbReference type="ChEBI" id="CHEBI:58349"/>
    </ligand>
</feature>
<feature type="binding site" evidence="1">
    <location>
        <begin position="84"/>
        <end position="87"/>
    </location>
    <ligand>
        <name>NADP(+)</name>
        <dbReference type="ChEBI" id="CHEBI:58349"/>
    </ligand>
</feature>
<feature type="binding site" evidence="1">
    <location>
        <position position="135"/>
    </location>
    <ligand>
        <name>NADP(+)</name>
        <dbReference type="ChEBI" id="CHEBI:58349"/>
    </ligand>
</feature>
<feature type="binding site" evidence="1">
    <location>
        <position position="192"/>
    </location>
    <ligand>
        <name>Mg(2+)</name>
        <dbReference type="ChEBI" id="CHEBI:18420"/>
        <label>1</label>
    </ligand>
</feature>
<feature type="binding site" evidence="1">
    <location>
        <position position="192"/>
    </location>
    <ligand>
        <name>Mg(2+)</name>
        <dbReference type="ChEBI" id="CHEBI:18420"/>
        <label>2</label>
    </ligand>
</feature>
<feature type="binding site" evidence="1">
    <location>
        <position position="196"/>
    </location>
    <ligand>
        <name>Mg(2+)</name>
        <dbReference type="ChEBI" id="CHEBI:18420"/>
        <label>1</label>
    </ligand>
</feature>
<feature type="binding site" evidence="1">
    <location>
        <position position="228"/>
    </location>
    <ligand>
        <name>Mg(2+)</name>
        <dbReference type="ChEBI" id="CHEBI:18420"/>
        <label>2</label>
    </ligand>
</feature>
<feature type="binding site" evidence="1">
    <location>
        <position position="232"/>
    </location>
    <ligand>
        <name>Mg(2+)</name>
        <dbReference type="ChEBI" id="CHEBI:18420"/>
        <label>2</label>
    </ligand>
</feature>
<feature type="binding site" evidence="1">
    <location>
        <position position="253"/>
    </location>
    <ligand>
        <name>substrate</name>
    </ligand>
</feature>
<gene>
    <name evidence="1" type="primary">ilvC</name>
    <name type="ordered locus">C8J_0591</name>
</gene>
<evidence type="ECO:0000255" key="1">
    <source>
        <dbReference type="HAMAP-Rule" id="MF_00435"/>
    </source>
</evidence>
<evidence type="ECO:0000255" key="2">
    <source>
        <dbReference type="PROSITE-ProRule" id="PRU01197"/>
    </source>
</evidence>
<evidence type="ECO:0000255" key="3">
    <source>
        <dbReference type="PROSITE-ProRule" id="PRU01198"/>
    </source>
</evidence>
<dbReference type="EC" id="1.1.1.86" evidence="1"/>
<dbReference type="EMBL" id="CP000814">
    <property type="protein sequence ID" value="ABV52190.1"/>
    <property type="molecule type" value="Genomic_DNA"/>
</dbReference>
<dbReference type="RefSeq" id="WP_002866493.1">
    <property type="nucleotide sequence ID" value="NC_009839.1"/>
</dbReference>
<dbReference type="SMR" id="A8FL53"/>
<dbReference type="KEGG" id="cju:C8J_0591"/>
<dbReference type="HOGENOM" id="CLU_033821_0_1_7"/>
<dbReference type="UniPathway" id="UPA00047">
    <property type="reaction ID" value="UER00056"/>
</dbReference>
<dbReference type="UniPathway" id="UPA00049">
    <property type="reaction ID" value="UER00060"/>
</dbReference>
<dbReference type="GO" id="GO:0005829">
    <property type="term" value="C:cytosol"/>
    <property type="evidence" value="ECO:0007669"/>
    <property type="project" value="TreeGrafter"/>
</dbReference>
<dbReference type="GO" id="GO:0004455">
    <property type="term" value="F:ketol-acid reductoisomerase activity"/>
    <property type="evidence" value="ECO:0007669"/>
    <property type="project" value="UniProtKB-UniRule"/>
</dbReference>
<dbReference type="GO" id="GO:0000287">
    <property type="term" value="F:magnesium ion binding"/>
    <property type="evidence" value="ECO:0007669"/>
    <property type="project" value="UniProtKB-UniRule"/>
</dbReference>
<dbReference type="GO" id="GO:0050661">
    <property type="term" value="F:NADP binding"/>
    <property type="evidence" value="ECO:0007669"/>
    <property type="project" value="InterPro"/>
</dbReference>
<dbReference type="GO" id="GO:0009097">
    <property type="term" value="P:isoleucine biosynthetic process"/>
    <property type="evidence" value="ECO:0007669"/>
    <property type="project" value="UniProtKB-UniRule"/>
</dbReference>
<dbReference type="GO" id="GO:0009099">
    <property type="term" value="P:L-valine biosynthetic process"/>
    <property type="evidence" value="ECO:0007669"/>
    <property type="project" value="UniProtKB-UniRule"/>
</dbReference>
<dbReference type="FunFam" id="3.40.50.720:FF:000023">
    <property type="entry name" value="Ketol-acid reductoisomerase (NADP(+))"/>
    <property type="match status" value="1"/>
</dbReference>
<dbReference type="Gene3D" id="6.10.240.10">
    <property type="match status" value="1"/>
</dbReference>
<dbReference type="Gene3D" id="3.40.50.720">
    <property type="entry name" value="NAD(P)-binding Rossmann-like Domain"/>
    <property type="match status" value="1"/>
</dbReference>
<dbReference type="HAMAP" id="MF_00435">
    <property type="entry name" value="IlvC"/>
    <property type="match status" value="1"/>
</dbReference>
<dbReference type="InterPro" id="IPR008927">
    <property type="entry name" value="6-PGluconate_DH-like_C_sf"/>
</dbReference>
<dbReference type="InterPro" id="IPR013023">
    <property type="entry name" value="KARI"/>
</dbReference>
<dbReference type="InterPro" id="IPR000506">
    <property type="entry name" value="KARI_C"/>
</dbReference>
<dbReference type="InterPro" id="IPR013116">
    <property type="entry name" value="KARI_N"/>
</dbReference>
<dbReference type="InterPro" id="IPR014359">
    <property type="entry name" value="KARI_prok"/>
</dbReference>
<dbReference type="InterPro" id="IPR036291">
    <property type="entry name" value="NAD(P)-bd_dom_sf"/>
</dbReference>
<dbReference type="NCBIfam" id="TIGR00465">
    <property type="entry name" value="ilvC"/>
    <property type="match status" value="1"/>
</dbReference>
<dbReference type="NCBIfam" id="NF004017">
    <property type="entry name" value="PRK05479.1"/>
    <property type="match status" value="1"/>
</dbReference>
<dbReference type="NCBIfam" id="NF009940">
    <property type="entry name" value="PRK13403.1"/>
    <property type="match status" value="1"/>
</dbReference>
<dbReference type="PANTHER" id="PTHR21371">
    <property type="entry name" value="KETOL-ACID REDUCTOISOMERASE, MITOCHONDRIAL"/>
    <property type="match status" value="1"/>
</dbReference>
<dbReference type="PANTHER" id="PTHR21371:SF1">
    <property type="entry name" value="KETOL-ACID REDUCTOISOMERASE, MITOCHONDRIAL"/>
    <property type="match status" value="1"/>
</dbReference>
<dbReference type="Pfam" id="PF01450">
    <property type="entry name" value="KARI_C"/>
    <property type="match status" value="1"/>
</dbReference>
<dbReference type="Pfam" id="PF07991">
    <property type="entry name" value="KARI_N"/>
    <property type="match status" value="1"/>
</dbReference>
<dbReference type="PIRSF" id="PIRSF000116">
    <property type="entry name" value="IlvC_gammaproteo"/>
    <property type="match status" value="1"/>
</dbReference>
<dbReference type="SUPFAM" id="SSF48179">
    <property type="entry name" value="6-phosphogluconate dehydrogenase C-terminal domain-like"/>
    <property type="match status" value="1"/>
</dbReference>
<dbReference type="SUPFAM" id="SSF51735">
    <property type="entry name" value="NAD(P)-binding Rossmann-fold domains"/>
    <property type="match status" value="1"/>
</dbReference>
<dbReference type="PROSITE" id="PS51851">
    <property type="entry name" value="KARI_C"/>
    <property type="match status" value="1"/>
</dbReference>
<dbReference type="PROSITE" id="PS51850">
    <property type="entry name" value="KARI_N"/>
    <property type="match status" value="1"/>
</dbReference>
<name>ILVC_CAMJ8</name>
<protein>
    <recommendedName>
        <fullName evidence="1">Ketol-acid reductoisomerase (NADP(+))</fullName>
        <shortName evidence="1">KARI</shortName>
        <ecNumber evidence="1">1.1.1.86</ecNumber>
    </recommendedName>
    <alternativeName>
        <fullName evidence="1">Acetohydroxy-acid isomeroreductase</fullName>
        <shortName evidence="1">AHIR</shortName>
    </alternativeName>
    <alternativeName>
        <fullName evidence="1">Alpha-keto-beta-hydroxylacyl reductoisomerase</fullName>
    </alternativeName>
    <alternativeName>
        <fullName evidence="1">Ketol-acid reductoisomerase type 1</fullName>
    </alternativeName>
    <alternativeName>
        <fullName evidence="1">Ketol-acid reductoisomerase type I</fullName>
    </alternativeName>
</protein>
<sequence>MAITVYYDKDCDLNLIKSKKVAIIGFGSQGHAHAMNLRDNGVNVTIGLREGSVSAVKAKNAGFEVMSVSEASKTADVVMILAPDEIQADIFNIEIKPNLSEGKAIAFAHGFNIHYGQIVAPKGIDVIMIAPKAPGHTVRNEFTLGGGTPCLIAIHQDESKNAKNLALSYASAIGGGRTGIIETTFKAETETDLFGEQAVLCGGLSALIQAGFETLVEAGYEPEMAYFECLHEMKLIVDLIYQGGIADMRYSISNTAEYGDYITGPKIITEETKKAMKGVLKDIQNGVFAKDFILERRAGFARMHAERKNMNDSLIEKTGRNLRAMMPWISAKKLVDKDKN</sequence>
<organism>
    <name type="scientific">Campylobacter jejuni subsp. jejuni serotype O:6 (strain 81116 / NCTC 11828)</name>
    <dbReference type="NCBI Taxonomy" id="407148"/>
    <lineage>
        <taxon>Bacteria</taxon>
        <taxon>Pseudomonadati</taxon>
        <taxon>Campylobacterota</taxon>
        <taxon>Epsilonproteobacteria</taxon>
        <taxon>Campylobacterales</taxon>
        <taxon>Campylobacteraceae</taxon>
        <taxon>Campylobacter</taxon>
    </lineage>
</organism>
<reference key="1">
    <citation type="journal article" date="2007" name="J. Bacteriol.">
        <title>The complete genome sequence of Campylobacter jejuni strain 81116 (NCTC11828).</title>
        <authorList>
            <person name="Pearson B.M."/>
            <person name="Gaskin D.J.H."/>
            <person name="Segers R.P.A.M."/>
            <person name="Wells J.M."/>
            <person name="Nuijten P.J.M."/>
            <person name="van Vliet A.H.M."/>
        </authorList>
    </citation>
    <scope>NUCLEOTIDE SEQUENCE [LARGE SCALE GENOMIC DNA]</scope>
    <source>
        <strain>81116 / NCTC 11828</strain>
    </source>
</reference>
<accession>A8FL53</accession>
<proteinExistence type="inferred from homology"/>